<feature type="chain" id="PRO_0000068200" description="UPF0229 protein PP_0396">
    <location>
        <begin position="1"/>
        <end position="423"/>
    </location>
</feature>
<feature type="region of interest" description="Disordered" evidence="2">
    <location>
        <begin position="81"/>
        <end position="108"/>
    </location>
</feature>
<feature type="compositionally biased region" description="Gly residues" evidence="2">
    <location>
        <begin position="92"/>
        <end position="107"/>
    </location>
</feature>
<keyword id="KW-1185">Reference proteome</keyword>
<sequence length="423" mass="48751">MSYVIDRRLNGKNKSTVNRQRFLRRYREHIKKAVEEAVSRRSIMDMEHGEQISIPGRDIDEPVLHHGRGGKQTIVHPGNKEFTAGEHIPRPQGGGGGGGRGKAGNSGEGMDEFVFQITQEEFLEFMFEDLELPNLVKRHLTGADTFKTVRAGIANEGNPSRINIVRTLRSAHARRIALTGSSRALLREAQKELDRLRVEEPDNFTDIQEVEQEIERLKARINRLPFLDTFDLKYNLLVKQPNPSSKAVMFCLMDVSGSMTQATKDIAKRFFILLYLFLKRNYERIEVVFIRHHTSAREVDEEEFFYSRETGGTIVSSALKLMQEIMAERYPASDWNIYAAQASDGDNWNDDSPICRDILSKQIMPHVQYYTYVEITPREHQALWYEYERIGDAFPDTFAQQQLVSAGDIYPVFRELFQRRLAT</sequence>
<proteinExistence type="inferred from homology"/>
<accession>P59351</accession>
<dbReference type="EMBL" id="AE015451">
    <property type="protein sequence ID" value="AAN66027.1"/>
    <property type="status" value="ALT_INIT"/>
    <property type="molecule type" value="Genomic_DNA"/>
</dbReference>
<dbReference type="RefSeq" id="NP_742563.2">
    <property type="nucleotide sequence ID" value="NC_002947.4"/>
</dbReference>
<dbReference type="RefSeq" id="WP_003255564.1">
    <property type="nucleotide sequence ID" value="NZ_CP169744.1"/>
</dbReference>
<dbReference type="STRING" id="160488.PP_0396"/>
<dbReference type="PaxDb" id="160488-PP_0396"/>
<dbReference type="KEGG" id="ppu:PP_0396"/>
<dbReference type="PATRIC" id="fig|160488.4.peg.426"/>
<dbReference type="eggNOG" id="COG2718">
    <property type="taxonomic scope" value="Bacteria"/>
</dbReference>
<dbReference type="HOGENOM" id="CLU_049702_0_0_6"/>
<dbReference type="OrthoDB" id="9788289at2"/>
<dbReference type="PhylomeDB" id="P59351"/>
<dbReference type="BioCyc" id="PPUT160488:G1G01-433-MONOMER"/>
<dbReference type="Proteomes" id="UP000000556">
    <property type="component" value="Chromosome"/>
</dbReference>
<dbReference type="HAMAP" id="MF_01232">
    <property type="entry name" value="UPF0229"/>
    <property type="match status" value="1"/>
</dbReference>
<dbReference type="InterPro" id="IPR006698">
    <property type="entry name" value="UPF0229"/>
</dbReference>
<dbReference type="NCBIfam" id="NF003707">
    <property type="entry name" value="PRK05325.1-2"/>
    <property type="match status" value="1"/>
</dbReference>
<dbReference type="NCBIfam" id="NF003708">
    <property type="entry name" value="PRK05325.1-3"/>
    <property type="match status" value="1"/>
</dbReference>
<dbReference type="PANTHER" id="PTHR30510">
    <property type="entry name" value="UPF0229 PROTEIN YEAH"/>
    <property type="match status" value="1"/>
</dbReference>
<dbReference type="PANTHER" id="PTHR30510:SF2">
    <property type="entry name" value="UPF0229 PROTEIN YEAH"/>
    <property type="match status" value="1"/>
</dbReference>
<dbReference type="Pfam" id="PF04285">
    <property type="entry name" value="DUF444"/>
    <property type="match status" value="1"/>
</dbReference>
<reference key="1">
    <citation type="journal article" date="2002" name="Environ. Microbiol.">
        <title>Complete genome sequence and comparative analysis of the metabolically versatile Pseudomonas putida KT2440.</title>
        <authorList>
            <person name="Nelson K.E."/>
            <person name="Weinel C."/>
            <person name="Paulsen I.T."/>
            <person name="Dodson R.J."/>
            <person name="Hilbert H."/>
            <person name="Martins dos Santos V.A.P."/>
            <person name="Fouts D.E."/>
            <person name="Gill S.R."/>
            <person name="Pop M."/>
            <person name="Holmes M."/>
            <person name="Brinkac L.M."/>
            <person name="Beanan M.J."/>
            <person name="DeBoy R.T."/>
            <person name="Daugherty S.C."/>
            <person name="Kolonay J.F."/>
            <person name="Madupu R."/>
            <person name="Nelson W.C."/>
            <person name="White O."/>
            <person name="Peterson J.D."/>
            <person name="Khouri H.M."/>
            <person name="Hance I."/>
            <person name="Chris Lee P."/>
            <person name="Holtzapple E.K."/>
            <person name="Scanlan D."/>
            <person name="Tran K."/>
            <person name="Moazzez A."/>
            <person name="Utterback T.R."/>
            <person name="Rizzo M."/>
            <person name="Lee K."/>
            <person name="Kosack D."/>
            <person name="Moestl D."/>
            <person name="Wedler H."/>
            <person name="Lauber J."/>
            <person name="Stjepandic D."/>
            <person name="Hoheisel J."/>
            <person name="Straetz M."/>
            <person name="Heim S."/>
            <person name="Kiewitz C."/>
            <person name="Eisen J.A."/>
            <person name="Timmis K.N."/>
            <person name="Duesterhoeft A."/>
            <person name="Tuemmler B."/>
            <person name="Fraser C.M."/>
        </authorList>
    </citation>
    <scope>NUCLEOTIDE SEQUENCE [LARGE SCALE GENOMIC DNA]</scope>
    <source>
        <strain>ATCC 47054 / DSM 6125 / CFBP 8728 / NCIMB 11950 / KT2440</strain>
    </source>
</reference>
<gene>
    <name type="ordered locus">PP_0396</name>
</gene>
<evidence type="ECO:0000255" key="1">
    <source>
        <dbReference type="HAMAP-Rule" id="MF_01232"/>
    </source>
</evidence>
<evidence type="ECO:0000256" key="2">
    <source>
        <dbReference type="SAM" id="MobiDB-lite"/>
    </source>
</evidence>
<evidence type="ECO:0000305" key="3"/>
<name>Y396_PSEPK</name>
<protein>
    <recommendedName>
        <fullName evidence="1">UPF0229 protein PP_0396</fullName>
    </recommendedName>
</protein>
<comment type="similarity">
    <text evidence="1">Belongs to the UPF0229 family.</text>
</comment>
<comment type="sequence caution" evidence="3">
    <conflict type="erroneous initiation">
        <sequence resource="EMBL-CDS" id="AAN66027"/>
    </conflict>
</comment>
<organism>
    <name type="scientific">Pseudomonas putida (strain ATCC 47054 / DSM 6125 / CFBP 8728 / NCIMB 11950 / KT2440)</name>
    <dbReference type="NCBI Taxonomy" id="160488"/>
    <lineage>
        <taxon>Bacteria</taxon>
        <taxon>Pseudomonadati</taxon>
        <taxon>Pseudomonadota</taxon>
        <taxon>Gammaproteobacteria</taxon>
        <taxon>Pseudomonadales</taxon>
        <taxon>Pseudomonadaceae</taxon>
        <taxon>Pseudomonas</taxon>
    </lineage>
</organism>